<gene>
    <name type="ORF">SMAC_06113</name>
</gene>
<name>ACUK_SORMK</name>
<feature type="chain" id="PRO_0000406452" description="Transcription activator of gluconeogenesis SMAC_06113">
    <location>
        <begin position="1"/>
        <end position="738"/>
    </location>
</feature>
<feature type="domain" description="PAS">
    <location>
        <begin position="475"/>
        <end position="546"/>
    </location>
</feature>
<feature type="DNA-binding region" description="Zn(2)-C6 fungal-type" evidence="2">
    <location>
        <begin position="74"/>
        <end position="102"/>
    </location>
</feature>
<feature type="region of interest" description="Disordered" evidence="3">
    <location>
        <begin position="1"/>
        <end position="65"/>
    </location>
</feature>
<feature type="region of interest" description="Disordered" evidence="3">
    <location>
        <begin position="255"/>
        <end position="278"/>
    </location>
</feature>
<feature type="region of interest" description="Disordered" evidence="3">
    <location>
        <begin position="328"/>
        <end position="404"/>
    </location>
</feature>
<feature type="region of interest" description="Disordered" evidence="3">
    <location>
        <begin position="530"/>
        <end position="579"/>
    </location>
</feature>
<feature type="region of interest" description="Disordered" evidence="3">
    <location>
        <begin position="636"/>
        <end position="673"/>
    </location>
</feature>
<feature type="compositionally biased region" description="Basic and acidic residues" evidence="3">
    <location>
        <begin position="28"/>
        <end position="39"/>
    </location>
</feature>
<feature type="compositionally biased region" description="Basic and acidic residues" evidence="3">
    <location>
        <begin position="51"/>
        <end position="64"/>
    </location>
</feature>
<feature type="compositionally biased region" description="Polar residues" evidence="3">
    <location>
        <begin position="337"/>
        <end position="351"/>
    </location>
</feature>
<feature type="compositionally biased region" description="Polar residues" evidence="3">
    <location>
        <begin position="530"/>
        <end position="540"/>
    </location>
</feature>
<feature type="compositionally biased region" description="Low complexity" evidence="3">
    <location>
        <begin position="568"/>
        <end position="579"/>
    </location>
</feature>
<feature type="compositionally biased region" description="Low complexity" evidence="3">
    <location>
        <begin position="636"/>
        <end position="655"/>
    </location>
</feature>
<comment type="function">
    <text evidence="1">Transcription factor which regulates nonfermentable carbon utilization. Activator of gluconeogenetic genes (By similarity).</text>
</comment>
<comment type="subcellular location">
    <subcellularLocation>
        <location evidence="2">Nucleus</location>
    </subcellularLocation>
</comment>
<comment type="similarity">
    <text evidence="4">Belongs to the ERT1/acuK family.</text>
</comment>
<comment type="sequence caution" evidence="4">
    <conflict type="erroneous gene model prediction">
        <sequence resource="EMBL-CDS" id="CCC12971"/>
    </conflict>
</comment>
<comment type="sequence caution" evidence="4">
    <conflict type="frameshift">
        <sequence resource="EMBL-CDS" id="CCC12971"/>
    </conflict>
</comment>
<dbReference type="EMBL" id="CABT02000033">
    <property type="protein sequence ID" value="CCC12971.1"/>
    <property type="status" value="ALT_SEQ"/>
    <property type="molecule type" value="Genomic_DNA"/>
</dbReference>
<dbReference type="FunCoup" id="D1ZRZ5">
    <property type="interactions" value="190"/>
</dbReference>
<dbReference type="VEuPathDB" id="FungiDB:SMAC_06113"/>
<dbReference type="eggNOG" id="ENOG502R1M5">
    <property type="taxonomic scope" value="Eukaryota"/>
</dbReference>
<dbReference type="HOGENOM" id="CLU_010748_1_0_1"/>
<dbReference type="InParanoid" id="D1ZRZ5"/>
<dbReference type="OrthoDB" id="2538135at2759"/>
<dbReference type="Proteomes" id="UP000001881">
    <property type="component" value="Unassembled WGS sequence"/>
</dbReference>
<dbReference type="GO" id="GO:0005634">
    <property type="term" value="C:nucleus"/>
    <property type="evidence" value="ECO:0007669"/>
    <property type="project" value="UniProtKB-SubCell"/>
</dbReference>
<dbReference type="GO" id="GO:0000981">
    <property type="term" value="F:DNA-binding transcription factor activity, RNA polymerase II-specific"/>
    <property type="evidence" value="ECO:0007669"/>
    <property type="project" value="InterPro"/>
</dbReference>
<dbReference type="GO" id="GO:0000977">
    <property type="term" value="F:RNA polymerase II transcription regulatory region sequence-specific DNA binding"/>
    <property type="evidence" value="ECO:0007669"/>
    <property type="project" value="TreeGrafter"/>
</dbReference>
<dbReference type="GO" id="GO:0008270">
    <property type="term" value="F:zinc ion binding"/>
    <property type="evidence" value="ECO:0007669"/>
    <property type="project" value="InterPro"/>
</dbReference>
<dbReference type="GO" id="GO:0009267">
    <property type="term" value="P:cellular response to starvation"/>
    <property type="evidence" value="ECO:0007669"/>
    <property type="project" value="TreeGrafter"/>
</dbReference>
<dbReference type="GO" id="GO:0006094">
    <property type="term" value="P:gluconeogenesis"/>
    <property type="evidence" value="ECO:0007669"/>
    <property type="project" value="UniProtKB-KW"/>
</dbReference>
<dbReference type="CDD" id="cd00067">
    <property type="entry name" value="GAL4"/>
    <property type="match status" value="1"/>
</dbReference>
<dbReference type="InterPro" id="IPR050335">
    <property type="entry name" value="ERT1_acuK_gluconeogen_tf"/>
</dbReference>
<dbReference type="InterPro" id="IPR056751">
    <property type="entry name" value="PAS_13"/>
</dbReference>
<dbReference type="InterPro" id="IPR036864">
    <property type="entry name" value="Zn2-C6_fun-type_DNA-bd_sf"/>
</dbReference>
<dbReference type="InterPro" id="IPR001138">
    <property type="entry name" value="Zn2Cys6_DnaBD"/>
</dbReference>
<dbReference type="PANTHER" id="PTHR47659:SF1">
    <property type="entry name" value="TRANSCRIPTION ACTIVATOR OF GLUCONEOGENESIS ERT1"/>
    <property type="match status" value="1"/>
</dbReference>
<dbReference type="PANTHER" id="PTHR47659">
    <property type="entry name" value="ZN(II)2CYS6 TRANSCRIPTION FACTOR (EUROFUNG)-RELATED"/>
    <property type="match status" value="1"/>
</dbReference>
<dbReference type="Pfam" id="PF24990">
    <property type="entry name" value="PAS_13"/>
    <property type="match status" value="1"/>
</dbReference>
<dbReference type="SMART" id="SM00066">
    <property type="entry name" value="GAL4"/>
    <property type="match status" value="1"/>
</dbReference>
<dbReference type="SUPFAM" id="SSF57701">
    <property type="entry name" value="Zn2/Cys6 DNA-binding domain"/>
    <property type="match status" value="1"/>
</dbReference>
<dbReference type="PROSITE" id="PS50048">
    <property type="entry name" value="ZN2_CY6_FUNGAL_2"/>
    <property type="match status" value="1"/>
</dbReference>
<sequence length="738" mass="79145">MPDDVGPAEAEVSGAVSESDNEYDETEATTKDDDEKMAERSAASEGVETNGDQKKKYDPKDPLRPRRKKARRACYACQRAHLTCGDERPCQRCIKRGLAEACQDGVRKKAKYLHDAPPEALRPVLGPNYNPAAAVSVRNGHRHPSNAGSDAGSSVGTFFSQSTQYPVFSSAATQLGSIPENLPFPQQSPVSPTFQASGNPQLGSIGVNSVSSPMNSFPPALFDPSNPAIFNFNLEGLNFGSQYGAMEFGMLGHMSSGAAETPPRDPSISQQGTAGDVGFNPSGVFGNGLNQFDKVYDNNTGLMSDFLTLDAHSSGLYSQGNLQHGLPHAYAIPAGPTSLQSPSTENNSPQPTGFGFESPTTTNYTGVPGAGGNQPGSQQSRTQKPKTPALGKLGPQSVLGKRQRDPSSIYEAVKEPFQYVASFHKLISLLQNRFSGASTISIVRSLASIRPSFMSCMKTLNRADLIFMEKSFQRALFEHEEFMHQSPSPAIACRRTGEIAGVNKEFTALTGWTKDVLLGKTLNLNANMGGTNSDTLSVSSKGGRGGIVGTTPRLKPLNPEQGPNADGQQQQSQQQKEQPQPVFLAELMDEASVTQFYEDYAQLAFTHSRGTVVRKCRLLKYRTQENMDAAAAAASSVPTTAGGSGSSNGTVVNGGPDSSPAGKTERERSTGANVASNSILSNRVAKIDGEHGISKLERDGKLECSYTWTIKRDVFDIPMIIMINFLPCYYRSHNQLAV</sequence>
<organism>
    <name type="scientific">Sordaria macrospora (strain ATCC MYA-333 / DSM 997 / K(L3346) / K-hell)</name>
    <dbReference type="NCBI Taxonomy" id="771870"/>
    <lineage>
        <taxon>Eukaryota</taxon>
        <taxon>Fungi</taxon>
        <taxon>Dikarya</taxon>
        <taxon>Ascomycota</taxon>
        <taxon>Pezizomycotina</taxon>
        <taxon>Sordariomycetes</taxon>
        <taxon>Sordariomycetidae</taxon>
        <taxon>Sordariales</taxon>
        <taxon>Sordariaceae</taxon>
        <taxon>Sordaria</taxon>
    </lineage>
</organism>
<keyword id="KW-0010">Activator</keyword>
<keyword id="KW-0238">DNA-binding</keyword>
<keyword id="KW-0312">Gluconeogenesis</keyword>
<keyword id="KW-0479">Metal-binding</keyword>
<keyword id="KW-0539">Nucleus</keyword>
<keyword id="KW-1185">Reference proteome</keyword>
<keyword id="KW-0804">Transcription</keyword>
<keyword id="KW-0805">Transcription regulation</keyword>
<keyword id="KW-0862">Zinc</keyword>
<accession>D1ZRZ5</accession>
<accession>F7W633</accession>
<proteinExistence type="inferred from homology"/>
<protein>
    <recommendedName>
        <fullName>Transcription activator of gluconeogenesis SMAC_06113</fullName>
    </recommendedName>
</protein>
<reference key="1">
    <citation type="journal article" date="2010" name="PLoS Genet.">
        <title>De novo assembly of a 40 Mb eukaryotic genome from short sequence reads: Sordaria macrospora, a model organism for fungal morphogenesis.</title>
        <authorList>
            <person name="Nowrousian M."/>
            <person name="Stajich J.E."/>
            <person name="Chu M."/>
            <person name="Engh I."/>
            <person name="Espagne E."/>
            <person name="Halliday K."/>
            <person name="Kamerewerd J."/>
            <person name="Kempken F."/>
            <person name="Knab B."/>
            <person name="Kuo H.-C."/>
            <person name="Osiewacz H.D."/>
            <person name="Poeggeler S."/>
            <person name="Read N.D."/>
            <person name="Seiler S."/>
            <person name="Smith K.M."/>
            <person name="Zickler D."/>
            <person name="Kueck U."/>
            <person name="Freitag M."/>
        </authorList>
    </citation>
    <scope>NUCLEOTIDE SEQUENCE [LARGE SCALE GENOMIC DNA]</scope>
    <source>
        <strain>ATCC MYA-333 / DSM 997 / K(L3346) / K-hell</strain>
    </source>
</reference>
<evidence type="ECO:0000250" key="1"/>
<evidence type="ECO:0000255" key="2">
    <source>
        <dbReference type="PROSITE-ProRule" id="PRU00227"/>
    </source>
</evidence>
<evidence type="ECO:0000256" key="3">
    <source>
        <dbReference type="SAM" id="MobiDB-lite"/>
    </source>
</evidence>
<evidence type="ECO:0000305" key="4"/>